<comment type="function">
    <text evidence="1">May negatively regulate the snf-1 kinase.</text>
</comment>
<comment type="subcellular location">
    <subcellularLocation>
        <location evidence="1">Cytoplasm</location>
    </subcellularLocation>
</comment>
<comment type="similarity">
    <text evidence="3">Belongs to the SIP5 family.</text>
</comment>
<keyword id="KW-0963">Cytoplasm</keyword>
<keyword id="KW-1185">Reference proteome</keyword>
<reference key="1">
    <citation type="journal article" date="2003" name="Nature">
        <title>The genome sequence of the filamentous fungus Neurospora crassa.</title>
        <authorList>
            <person name="Galagan J.E."/>
            <person name="Calvo S.E."/>
            <person name="Borkovich K.A."/>
            <person name="Selker E.U."/>
            <person name="Read N.D."/>
            <person name="Jaffe D.B."/>
            <person name="FitzHugh W."/>
            <person name="Ma L.-J."/>
            <person name="Smirnov S."/>
            <person name="Purcell S."/>
            <person name="Rehman B."/>
            <person name="Elkins T."/>
            <person name="Engels R."/>
            <person name="Wang S."/>
            <person name="Nielsen C.B."/>
            <person name="Butler J."/>
            <person name="Endrizzi M."/>
            <person name="Qui D."/>
            <person name="Ianakiev P."/>
            <person name="Bell-Pedersen D."/>
            <person name="Nelson M.A."/>
            <person name="Werner-Washburne M."/>
            <person name="Selitrennikoff C.P."/>
            <person name="Kinsey J.A."/>
            <person name="Braun E.L."/>
            <person name="Zelter A."/>
            <person name="Schulte U."/>
            <person name="Kothe G.O."/>
            <person name="Jedd G."/>
            <person name="Mewes H.-W."/>
            <person name="Staben C."/>
            <person name="Marcotte E."/>
            <person name="Greenberg D."/>
            <person name="Roy A."/>
            <person name="Foley K."/>
            <person name="Naylor J."/>
            <person name="Stange-Thomann N."/>
            <person name="Barrett R."/>
            <person name="Gnerre S."/>
            <person name="Kamal M."/>
            <person name="Kamvysselis M."/>
            <person name="Mauceli E.W."/>
            <person name="Bielke C."/>
            <person name="Rudd S."/>
            <person name="Frishman D."/>
            <person name="Krystofova S."/>
            <person name="Rasmussen C."/>
            <person name="Metzenberg R.L."/>
            <person name="Perkins D.D."/>
            <person name="Kroken S."/>
            <person name="Cogoni C."/>
            <person name="Macino G."/>
            <person name="Catcheside D.E.A."/>
            <person name="Li W."/>
            <person name="Pratt R.J."/>
            <person name="Osmani S.A."/>
            <person name="DeSouza C.P.C."/>
            <person name="Glass N.L."/>
            <person name="Orbach M.J."/>
            <person name="Berglund J.A."/>
            <person name="Voelker R."/>
            <person name="Yarden O."/>
            <person name="Plamann M."/>
            <person name="Seiler S."/>
            <person name="Dunlap J.C."/>
            <person name="Radford A."/>
            <person name="Aramayo R."/>
            <person name="Natvig D.O."/>
            <person name="Alex L.A."/>
            <person name="Mannhaupt G."/>
            <person name="Ebbole D.J."/>
            <person name="Freitag M."/>
            <person name="Paulsen I."/>
            <person name="Sachs M.S."/>
            <person name="Lander E.S."/>
            <person name="Nusbaum C."/>
            <person name="Birren B.W."/>
        </authorList>
    </citation>
    <scope>NUCLEOTIDE SEQUENCE [LARGE SCALE GENOMIC DNA]</scope>
    <source>
        <strain>ATCC 24698 / 74-OR23-1A / CBS 708.71 / DSM 1257 / FGSC 987</strain>
    </source>
</reference>
<organism>
    <name type="scientific">Neurospora crassa (strain ATCC 24698 / 74-OR23-1A / CBS 708.71 / DSM 1257 / FGSC 987)</name>
    <dbReference type="NCBI Taxonomy" id="367110"/>
    <lineage>
        <taxon>Eukaryota</taxon>
        <taxon>Fungi</taxon>
        <taxon>Dikarya</taxon>
        <taxon>Ascomycota</taxon>
        <taxon>Pezizomycotina</taxon>
        <taxon>Sordariomycetes</taxon>
        <taxon>Sordariomycetidae</taxon>
        <taxon>Sordariales</taxon>
        <taxon>Sordariaceae</taxon>
        <taxon>Neurospora</taxon>
    </lineage>
</organism>
<name>SIP5_NEUCR</name>
<dbReference type="EMBL" id="CM002241">
    <property type="protein sequence ID" value="EAA31315.1"/>
    <property type="molecule type" value="Genomic_DNA"/>
</dbReference>
<dbReference type="RefSeq" id="XP_960551.1">
    <property type="nucleotide sequence ID" value="XM_955458.2"/>
</dbReference>
<dbReference type="FunCoup" id="Q7S6X4">
    <property type="interactions" value="37"/>
</dbReference>
<dbReference type="STRING" id="367110.Q7S6X4"/>
<dbReference type="PaxDb" id="5141-EFNCRP00000005553"/>
<dbReference type="EnsemblFungi" id="EAA31315">
    <property type="protein sequence ID" value="EAA31315"/>
    <property type="gene ID" value="NCU05589"/>
</dbReference>
<dbReference type="GeneID" id="3876713"/>
<dbReference type="KEGG" id="ncr:NCU05589"/>
<dbReference type="VEuPathDB" id="FungiDB:NCU05589"/>
<dbReference type="HOGENOM" id="CLU_009068_1_0_1"/>
<dbReference type="InParanoid" id="Q7S6X4"/>
<dbReference type="OMA" id="CFLTYPP"/>
<dbReference type="OrthoDB" id="21471at2759"/>
<dbReference type="Proteomes" id="UP000001805">
    <property type="component" value="Chromosome 5, Linkage Group VI"/>
</dbReference>
<dbReference type="GO" id="GO:0005737">
    <property type="term" value="C:cytoplasm"/>
    <property type="evidence" value="ECO:0007669"/>
    <property type="project" value="UniProtKB-SubCell"/>
</dbReference>
<dbReference type="CDD" id="cd24139">
    <property type="entry name" value="SIP5-like"/>
    <property type="match status" value="1"/>
</dbReference>
<dbReference type="InterPro" id="IPR039301">
    <property type="entry name" value="Sip5/DA2"/>
</dbReference>
<dbReference type="PANTHER" id="PTHR31315">
    <property type="entry name" value="PROTEIN SIP5"/>
    <property type="match status" value="1"/>
</dbReference>
<dbReference type="PANTHER" id="PTHR31315:SF1">
    <property type="entry name" value="PROTEIN SIP5"/>
    <property type="match status" value="1"/>
</dbReference>
<feature type="chain" id="PRO_0000333439" description="Protein sip-5">
    <location>
        <begin position="1"/>
        <end position="857"/>
    </location>
</feature>
<feature type="region of interest" description="Disordered" evidence="2">
    <location>
        <begin position="1"/>
        <end position="81"/>
    </location>
</feature>
<feature type="region of interest" description="Disordered" evidence="2">
    <location>
        <begin position="157"/>
        <end position="231"/>
    </location>
</feature>
<feature type="region of interest" description="Disordered" evidence="2">
    <location>
        <begin position="384"/>
        <end position="416"/>
    </location>
</feature>
<feature type="region of interest" description="Disordered" evidence="2">
    <location>
        <begin position="466"/>
        <end position="517"/>
    </location>
</feature>
<feature type="region of interest" description="Disordered" evidence="2">
    <location>
        <begin position="545"/>
        <end position="747"/>
    </location>
</feature>
<feature type="region of interest" description="Disordered" evidence="2">
    <location>
        <begin position="763"/>
        <end position="857"/>
    </location>
</feature>
<feature type="compositionally biased region" description="Basic and acidic residues" evidence="2">
    <location>
        <begin position="7"/>
        <end position="16"/>
    </location>
</feature>
<feature type="compositionally biased region" description="Basic and acidic residues" evidence="2">
    <location>
        <begin position="36"/>
        <end position="48"/>
    </location>
</feature>
<feature type="compositionally biased region" description="Low complexity" evidence="2">
    <location>
        <begin position="49"/>
        <end position="61"/>
    </location>
</feature>
<feature type="compositionally biased region" description="Basic and acidic residues" evidence="2">
    <location>
        <begin position="62"/>
        <end position="81"/>
    </location>
</feature>
<feature type="compositionally biased region" description="Polar residues" evidence="2">
    <location>
        <begin position="179"/>
        <end position="191"/>
    </location>
</feature>
<feature type="compositionally biased region" description="Polar residues" evidence="2">
    <location>
        <begin position="199"/>
        <end position="208"/>
    </location>
</feature>
<feature type="compositionally biased region" description="Low complexity" evidence="2">
    <location>
        <begin position="209"/>
        <end position="230"/>
    </location>
</feature>
<feature type="compositionally biased region" description="Low complexity" evidence="2">
    <location>
        <begin position="384"/>
        <end position="394"/>
    </location>
</feature>
<feature type="compositionally biased region" description="Low complexity" evidence="2">
    <location>
        <begin position="476"/>
        <end position="504"/>
    </location>
</feature>
<feature type="compositionally biased region" description="Basic and acidic residues" evidence="2">
    <location>
        <begin position="545"/>
        <end position="572"/>
    </location>
</feature>
<feature type="compositionally biased region" description="Low complexity" evidence="2">
    <location>
        <begin position="586"/>
        <end position="604"/>
    </location>
</feature>
<feature type="compositionally biased region" description="Low complexity" evidence="2">
    <location>
        <begin position="621"/>
        <end position="645"/>
    </location>
</feature>
<feature type="compositionally biased region" description="Basic and acidic residues" evidence="2">
    <location>
        <begin position="648"/>
        <end position="657"/>
    </location>
</feature>
<feature type="compositionally biased region" description="Low complexity" evidence="2">
    <location>
        <begin position="688"/>
        <end position="697"/>
    </location>
</feature>
<feature type="compositionally biased region" description="Polar residues" evidence="2">
    <location>
        <begin position="698"/>
        <end position="712"/>
    </location>
</feature>
<feature type="compositionally biased region" description="Basic and acidic residues" evidence="2">
    <location>
        <begin position="783"/>
        <end position="799"/>
    </location>
</feature>
<feature type="compositionally biased region" description="Polar residues" evidence="2">
    <location>
        <begin position="800"/>
        <end position="838"/>
    </location>
</feature>
<feature type="compositionally biased region" description="Polar residues" evidence="2">
    <location>
        <begin position="845"/>
        <end position="857"/>
    </location>
</feature>
<accession>Q7S6X4</accession>
<gene>
    <name type="primary">sip-5</name>
    <name type="ORF">NCU05589</name>
</gene>
<protein>
    <recommendedName>
        <fullName>Protein sip-5</fullName>
    </recommendedName>
</protein>
<evidence type="ECO:0000250" key="1"/>
<evidence type="ECO:0000256" key="2">
    <source>
        <dbReference type="SAM" id="MobiDB-lite"/>
    </source>
</evidence>
<evidence type="ECO:0000305" key="3"/>
<proteinExistence type="inferred from homology"/>
<sequence>MGNANTKESRGDDSGRRGLHSALDAGIGSSTQSGRESSRRNRNTRHDLTGLLGRAAGGSSSHADERHERKETKQEREARRLEKERVARLQERERSMKEEHVDGGYLVTMGTYVGPEDFNKQIVRQLMIERKLAPFWRGLNDFDENWTEPQIIAAARGLPIPAAGETPPDELIPRPRSPASPTDASSNTNHLTVPIGGRSLSTASEHSTSNAGSALPSPGSGKGSSSPFKPTRGKAIAAVLGGGSCRNGSSTEIAPREIMLPNDPFVNGQPLEVFLYKNATECPICFLTYPPYLNHTRCCDQPICSECFVQIKRPDPHFPEGHNENDPNNNPEESAGLLVSEPACCPYCTQPDFGVTYEPPPFRRGLTYAISPLALGSTSAAMSSESSVNSGSLSPGVASPGGRRRNQSLSANAPNVVLTDKVRPEWATKLQAARAHLARRAAAATALHTAAFLMNNNESRALRSRFGRRNTGGSGSASATPGNGDENRGTGPATPANAGATANTDRAAGSSGNGNRRSRLEDLEEMMFAEAIRLSLAAEEERKKKAEKEEQKEAKKREKEREKAEKKAEKAAAKAAAKQGGPYEASRSGHSSASGSSLSLPGLSFGRKRGNSAASNLRVEASVASAMASTGAAMTTPAAPGALAPDSSTKDKGKAVDRSAGAASNDASARPIPSPQPMAGPSHLRQMSSASSASSSAVESNQGSYVPPSNLQDPRGSGLSLGGRSGVSEDGDEQDRDPSTSTEPMFNFRSLAEVVGVSIEGEHAGKRLSQINADGQAIEGEDETAKSGEGAGEHVEHVLDSQTTGISEQDSEINSQPPRLTVTLDSPATSVGDVSTASDSKHVGNETTVEHATQVTL</sequence>